<protein>
    <recommendedName>
        <fullName evidence="1">Peptide chain release factor 1</fullName>
        <shortName evidence="1">RF-1</shortName>
    </recommendedName>
</protein>
<evidence type="ECO:0000255" key="1">
    <source>
        <dbReference type="HAMAP-Rule" id="MF_00093"/>
    </source>
</evidence>
<evidence type="ECO:0000256" key="2">
    <source>
        <dbReference type="SAM" id="MobiDB-lite"/>
    </source>
</evidence>
<comment type="function">
    <text evidence="1">Peptide chain release factor 1 directs the termination of translation in response to the peptide chain termination codons UAG and UAA.</text>
</comment>
<comment type="subcellular location">
    <subcellularLocation>
        <location evidence="1">Cytoplasm</location>
    </subcellularLocation>
</comment>
<comment type="PTM">
    <text evidence="1">Methylated by PrmC. Methylation increases the termination efficiency of RF1.</text>
</comment>
<comment type="similarity">
    <text evidence="1">Belongs to the prokaryotic/mitochondrial release factor family.</text>
</comment>
<gene>
    <name evidence="1" type="primary">prfA</name>
    <name type="ordered locus">HPG27_72</name>
</gene>
<feature type="chain" id="PRO_1000093462" description="Peptide chain release factor 1">
    <location>
        <begin position="1"/>
        <end position="352"/>
    </location>
</feature>
<feature type="region of interest" description="Disordered" evidence="2">
    <location>
        <begin position="288"/>
        <end position="309"/>
    </location>
</feature>
<feature type="compositionally biased region" description="Basic and acidic residues" evidence="2">
    <location>
        <begin position="289"/>
        <end position="306"/>
    </location>
</feature>
<feature type="modified residue" description="N5-methylglutamine" evidence="1">
    <location>
        <position position="233"/>
    </location>
</feature>
<reference key="1">
    <citation type="journal article" date="2009" name="J. Bacteriol.">
        <title>The complete genome sequence of Helicobacter pylori strain G27.</title>
        <authorList>
            <person name="Baltrus D.A."/>
            <person name="Amieva M.R."/>
            <person name="Covacci A."/>
            <person name="Lowe T.M."/>
            <person name="Merrell D.S."/>
            <person name="Ottemann K.M."/>
            <person name="Stein M."/>
            <person name="Salama N.R."/>
            <person name="Guillemin K."/>
        </authorList>
    </citation>
    <scope>NUCLEOTIDE SEQUENCE [LARGE SCALE GENOMIC DNA]</scope>
    <source>
        <strain>G27</strain>
    </source>
</reference>
<proteinExistence type="inferred from homology"/>
<organism>
    <name type="scientific">Helicobacter pylori (strain G27)</name>
    <dbReference type="NCBI Taxonomy" id="563041"/>
    <lineage>
        <taxon>Bacteria</taxon>
        <taxon>Pseudomonadati</taxon>
        <taxon>Campylobacterota</taxon>
        <taxon>Epsilonproteobacteria</taxon>
        <taxon>Campylobacterales</taxon>
        <taxon>Helicobacteraceae</taxon>
        <taxon>Helicobacter</taxon>
    </lineage>
</organism>
<name>RF1_HELPG</name>
<dbReference type="EMBL" id="CP001173">
    <property type="protein sequence ID" value="ACI26843.1"/>
    <property type="molecule type" value="Genomic_DNA"/>
</dbReference>
<dbReference type="RefSeq" id="WP_000025101.1">
    <property type="nucleotide sequence ID" value="NC_011333.1"/>
</dbReference>
<dbReference type="SMR" id="B5Z680"/>
<dbReference type="KEGG" id="hpg:HPG27_72"/>
<dbReference type="HOGENOM" id="CLU_036856_0_1_7"/>
<dbReference type="Proteomes" id="UP000001735">
    <property type="component" value="Chromosome"/>
</dbReference>
<dbReference type="GO" id="GO:0005737">
    <property type="term" value="C:cytoplasm"/>
    <property type="evidence" value="ECO:0007669"/>
    <property type="project" value="UniProtKB-SubCell"/>
</dbReference>
<dbReference type="GO" id="GO:0016149">
    <property type="term" value="F:translation release factor activity, codon specific"/>
    <property type="evidence" value="ECO:0007669"/>
    <property type="project" value="UniProtKB-UniRule"/>
</dbReference>
<dbReference type="FunFam" id="3.30.160.20:FF:000004">
    <property type="entry name" value="Peptide chain release factor 1"/>
    <property type="match status" value="1"/>
</dbReference>
<dbReference type="FunFam" id="3.30.70.1660:FF:000002">
    <property type="entry name" value="Peptide chain release factor 1"/>
    <property type="match status" value="1"/>
</dbReference>
<dbReference type="FunFam" id="3.30.70.1660:FF:000004">
    <property type="entry name" value="Peptide chain release factor 1"/>
    <property type="match status" value="1"/>
</dbReference>
<dbReference type="Gene3D" id="3.30.160.20">
    <property type="match status" value="1"/>
</dbReference>
<dbReference type="Gene3D" id="3.30.70.1660">
    <property type="match status" value="1"/>
</dbReference>
<dbReference type="Gene3D" id="6.10.140.1950">
    <property type="match status" value="1"/>
</dbReference>
<dbReference type="HAMAP" id="MF_00093">
    <property type="entry name" value="Rel_fac_1"/>
    <property type="match status" value="1"/>
</dbReference>
<dbReference type="InterPro" id="IPR005139">
    <property type="entry name" value="PCRF"/>
</dbReference>
<dbReference type="InterPro" id="IPR000352">
    <property type="entry name" value="Pep_chain_release_fac_I"/>
</dbReference>
<dbReference type="InterPro" id="IPR045853">
    <property type="entry name" value="Pep_chain_release_fac_I_sf"/>
</dbReference>
<dbReference type="InterPro" id="IPR050057">
    <property type="entry name" value="Prokaryotic/Mito_RF"/>
</dbReference>
<dbReference type="InterPro" id="IPR004373">
    <property type="entry name" value="RF-1"/>
</dbReference>
<dbReference type="NCBIfam" id="TIGR00019">
    <property type="entry name" value="prfA"/>
    <property type="match status" value="1"/>
</dbReference>
<dbReference type="NCBIfam" id="NF001859">
    <property type="entry name" value="PRK00591.1"/>
    <property type="match status" value="1"/>
</dbReference>
<dbReference type="PANTHER" id="PTHR43804">
    <property type="entry name" value="LD18447P"/>
    <property type="match status" value="1"/>
</dbReference>
<dbReference type="PANTHER" id="PTHR43804:SF7">
    <property type="entry name" value="LD18447P"/>
    <property type="match status" value="1"/>
</dbReference>
<dbReference type="Pfam" id="PF03462">
    <property type="entry name" value="PCRF"/>
    <property type="match status" value="1"/>
</dbReference>
<dbReference type="Pfam" id="PF00472">
    <property type="entry name" value="RF-1"/>
    <property type="match status" value="1"/>
</dbReference>
<dbReference type="SMART" id="SM00937">
    <property type="entry name" value="PCRF"/>
    <property type="match status" value="1"/>
</dbReference>
<dbReference type="SUPFAM" id="SSF75620">
    <property type="entry name" value="Release factor"/>
    <property type="match status" value="1"/>
</dbReference>
<dbReference type="PROSITE" id="PS00745">
    <property type="entry name" value="RF_PROK_I"/>
    <property type="match status" value="1"/>
</dbReference>
<keyword id="KW-0963">Cytoplasm</keyword>
<keyword id="KW-0488">Methylation</keyword>
<keyword id="KW-0648">Protein biosynthesis</keyword>
<keyword id="KW-1185">Reference proteome</keyword>
<sequence>MSILAEKLSSILKRYDELTALLSSAEVISDIKKLTELSKEQSSIEEISIASKEYLSVLEDIKENKELLEDKELSELAKEELKILETKKSDLETAIKQLLIPKDPNDDKNIYLELRAGTGGDEAGIFVGDLFKAYCRYADLKKWKVEIVSSSENSVGGYKEIIALIKGKGVYSRLKFEAGTHRVQRVPETESQGRIHTSAITVAIMPEVDDVEVSINPSDLKIEVFRAGGHGGQCVNTTDSAVRITHLPTNISVSMQDEKSQHKNKDKALKILKARLYEKQIEEQQLANAKDRKEQVGSGDRSERIRTYNYPQNRLSEHRINLTLYSLEEIMLSGNLDEVINPLIAHAQSQFE</sequence>
<accession>B5Z680</accession>